<protein>
    <recommendedName>
        <fullName evidence="1">Methylenetetrahydrofolate--tRNA-(uracil-5-)-methyltransferase TrmFO</fullName>
        <ecNumber evidence="1">2.1.1.74</ecNumber>
    </recommendedName>
    <alternativeName>
        <fullName evidence="1">Folate-dependent tRNA (uracil-5-)-methyltransferase</fullName>
    </alternativeName>
    <alternativeName>
        <fullName evidence="1">Folate-dependent tRNA(M-5-U54)-methyltransferase</fullName>
    </alternativeName>
</protein>
<sequence length="434" mass="47834">MEKSVNVIGAGLAGSEAAWQLVKRGVKVDLYEMRPVKQTPAHHTDKFAELVCTNSLRANGLTNAVGVIKEEMRLLDSIIIESADKASVPAGGALAVDRHEFSGYITDKVKNHPLVTIHTEEVTSIPEGPTIIATGPLTSPALAEEIKRLTGEEYLYFYDAAAPIIEKDSIDMDKVYLKSRYDKGEAAYLNCPMSEEEFNTFYEALVTAETAALKEFEKEVFFEGCMPIEVMAKRGIKTMLFGPLKPVGLEDPKTGKRPYAVLQLRQDDAAGTLYNMVGFQTHLKWGEQKRVFGLIPGLENAEIVRYGVMHRNTFINSPTVLEPTYQLKTRNDLFFAGQMTGVEGYVESAASGLAAGINAANFVQDKEPIVFPPESAIGSLANYITSASKKSFQPMNVNFGLFPELPTKIRAKQERNEKLAERALDAIKKVAEQL</sequence>
<gene>
    <name evidence="1" type="primary">trmFO</name>
    <name type="synonym">gid</name>
    <name type="ordered locus">lin1315</name>
</gene>
<keyword id="KW-0963">Cytoplasm</keyword>
<keyword id="KW-0274">FAD</keyword>
<keyword id="KW-0285">Flavoprotein</keyword>
<keyword id="KW-0489">Methyltransferase</keyword>
<keyword id="KW-0520">NAD</keyword>
<keyword id="KW-0521">NADP</keyword>
<keyword id="KW-0808">Transferase</keyword>
<keyword id="KW-0819">tRNA processing</keyword>
<dbReference type="EC" id="2.1.1.74" evidence="1"/>
<dbReference type="EMBL" id="AL596168">
    <property type="protein sequence ID" value="CAC96546.1"/>
    <property type="molecule type" value="Genomic_DNA"/>
</dbReference>
<dbReference type="PIR" id="AB1597">
    <property type="entry name" value="AB1597"/>
</dbReference>
<dbReference type="RefSeq" id="WP_010990920.1">
    <property type="nucleotide sequence ID" value="NC_003212.1"/>
</dbReference>
<dbReference type="SMR" id="Q92C76"/>
<dbReference type="STRING" id="272626.gene:17565646"/>
<dbReference type="GeneID" id="93234695"/>
<dbReference type="KEGG" id="lin:gid"/>
<dbReference type="eggNOG" id="COG1206">
    <property type="taxonomic scope" value="Bacteria"/>
</dbReference>
<dbReference type="HOGENOM" id="CLU_033057_1_0_9"/>
<dbReference type="OrthoDB" id="9803114at2"/>
<dbReference type="Proteomes" id="UP000002513">
    <property type="component" value="Chromosome"/>
</dbReference>
<dbReference type="GO" id="GO:0005829">
    <property type="term" value="C:cytosol"/>
    <property type="evidence" value="ECO:0007669"/>
    <property type="project" value="TreeGrafter"/>
</dbReference>
<dbReference type="GO" id="GO:0050660">
    <property type="term" value="F:flavin adenine dinucleotide binding"/>
    <property type="evidence" value="ECO:0007669"/>
    <property type="project" value="UniProtKB-UniRule"/>
</dbReference>
<dbReference type="GO" id="GO:0047151">
    <property type="term" value="F:tRNA (uracil(54)-C5)-methyltransferase activity, 5,10-methylenetetrahydrofolate-dependent"/>
    <property type="evidence" value="ECO:0007669"/>
    <property type="project" value="UniProtKB-UniRule"/>
</dbReference>
<dbReference type="GO" id="GO:0030488">
    <property type="term" value="P:tRNA methylation"/>
    <property type="evidence" value="ECO:0007669"/>
    <property type="project" value="TreeGrafter"/>
</dbReference>
<dbReference type="GO" id="GO:0002098">
    <property type="term" value="P:tRNA wobble uridine modification"/>
    <property type="evidence" value="ECO:0007669"/>
    <property type="project" value="TreeGrafter"/>
</dbReference>
<dbReference type="FunFam" id="3.50.50.60:FF:000035">
    <property type="entry name" value="Methylenetetrahydrofolate--tRNA-(uracil-5-)-methyltransferase TrmFO"/>
    <property type="match status" value="1"/>
</dbReference>
<dbReference type="FunFam" id="3.50.50.60:FF:000040">
    <property type="entry name" value="Methylenetetrahydrofolate--tRNA-(uracil-5-)-methyltransferase TrmFO"/>
    <property type="match status" value="1"/>
</dbReference>
<dbReference type="Gene3D" id="3.50.50.60">
    <property type="entry name" value="FAD/NAD(P)-binding domain"/>
    <property type="match status" value="2"/>
</dbReference>
<dbReference type="HAMAP" id="MF_01037">
    <property type="entry name" value="TrmFO"/>
    <property type="match status" value="1"/>
</dbReference>
<dbReference type="InterPro" id="IPR036188">
    <property type="entry name" value="FAD/NAD-bd_sf"/>
</dbReference>
<dbReference type="InterPro" id="IPR002218">
    <property type="entry name" value="MnmG-rel"/>
</dbReference>
<dbReference type="InterPro" id="IPR020595">
    <property type="entry name" value="MnmG-rel_CS"/>
</dbReference>
<dbReference type="InterPro" id="IPR040131">
    <property type="entry name" value="MnmG_N"/>
</dbReference>
<dbReference type="InterPro" id="IPR004417">
    <property type="entry name" value="TrmFO"/>
</dbReference>
<dbReference type="NCBIfam" id="TIGR00137">
    <property type="entry name" value="gid_trmFO"/>
    <property type="match status" value="1"/>
</dbReference>
<dbReference type="NCBIfam" id="NF003739">
    <property type="entry name" value="PRK05335.1"/>
    <property type="match status" value="1"/>
</dbReference>
<dbReference type="PANTHER" id="PTHR11806">
    <property type="entry name" value="GLUCOSE INHIBITED DIVISION PROTEIN A"/>
    <property type="match status" value="1"/>
</dbReference>
<dbReference type="PANTHER" id="PTHR11806:SF2">
    <property type="entry name" value="METHYLENETETRAHYDROFOLATE--TRNA-(URACIL-5-)-METHYLTRANSFERASE TRMFO"/>
    <property type="match status" value="1"/>
</dbReference>
<dbReference type="Pfam" id="PF01134">
    <property type="entry name" value="GIDA"/>
    <property type="match status" value="1"/>
</dbReference>
<dbReference type="SUPFAM" id="SSF51905">
    <property type="entry name" value="FAD/NAD(P)-binding domain"/>
    <property type="match status" value="1"/>
</dbReference>
<dbReference type="PROSITE" id="PS01281">
    <property type="entry name" value="GIDA_2"/>
    <property type="match status" value="1"/>
</dbReference>
<name>TRMFO_LISIN</name>
<reference key="1">
    <citation type="journal article" date="2001" name="Science">
        <title>Comparative genomics of Listeria species.</title>
        <authorList>
            <person name="Glaser P."/>
            <person name="Frangeul L."/>
            <person name="Buchrieser C."/>
            <person name="Rusniok C."/>
            <person name="Amend A."/>
            <person name="Baquero F."/>
            <person name="Berche P."/>
            <person name="Bloecker H."/>
            <person name="Brandt P."/>
            <person name="Chakraborty T."/>
            <person name="Charbit A."/>
            <person name="Chetouani F."/>
            <person name="Couve E."/>
            <person name="de Daruvar A."/>
            <person name="Dehoux P."/>
            <person name="Domann E."/>
            <person name="Dominguez-Bernal G."/>
            <person name="Duchaud E."/>
            <person name="Durant L."/>
            <person name="Dussurget O."/>
            <person name="Entian K.-D."/>
            <person name="Fsihi H."/>
            <person name="Garcia-del Portillo F."/>
            <person name="Garrido P."/>
            <person name="Gautier L."/>
            <person name="Goebel W."/>
            <person name="Gomez-Lopez N."/>
            <person name="Hain T."/>
            <person name="Hauf J."/>
            <person name="Jackson D."/>
            <person name="Jones L.-M."/>
            <person name="Kaerst U."/>
            <person name="Kreft J."/>
            <person name="Kuhn M."/>
            <person name="Kunst F."/>
            <person name="Kurapkat G."/>
            <person name="Madueno E."/>
            <person name="Maitournam A."/>
            <person name="Mata Vicente J."/>
            <person name="Ng E."/>
            <person name="Nedjari H."/>
            <person name="Nordsiek G."/>
            <person name="Novella S."/>
            <person name="de Pablos B."/>
            <person name="Perez-Diaz J.-C."/>
            <person name="Purcell R."/>
            <person name="Remmel B."/>
            <person name="Rose M."/>
            <person name="Schlueter T."/>
            <person name="Simoes N."/>
            <person name="Tierrez A."/>
            <person name="Vazquez-Boland J.-A."/>
            <person name="Voss H."/>
            <person name="Wehland J."/>
            <person name="Cossart P."/>
        </authorList>
    </citation>
    <scope>NUCLEOTIDE SEQUENCE [LARGE SCALE GENOMIC DNA]</scope>
    <source>
        <strain>ATCC BAA-680 / CLIP 11262</strain>
    </source>
</reference>
<comment type="function">
    <text evidence="1">Catalyzes the folate-dependent formation of 5-methyl-uridine at position 54 (M-5-U54) in all tRNAs.</text>
</comment>
<comment type="catalytic activity">
    <reaction evidence="1">
        <text>uridine(54) in tRNA + (6R)-5,10-methylene-5,6,7,8-tetrahydrofolate + NADH + H(+) = 5-methyluridine(54) in tRNA + (6S)-5,6,7,8-tetrahydrofolate + NAD(+)</text>
        <dbReference type="Rhea" id="RHEA:16873"/>
        <dbReference type="Rhea" id="RHEA-COMP:10167"/>
        <dbReference type="Rhea" id="RHEA-COMP:10193"/>
        <dbReference type="ChEBI" id="CHEBI:15378"/>
        <dbReference type="ChEBI" id="CHEBI:15636"/>
        <dbReference type="ChEBI" id="CHEBI:57453"/>
        <dbReference type="ChEBI" id="CHEBI:57540"/>
        <dbReference type="ChEBI" id="CHEBI:57945"/>
        <dbReference type="ChEBI" id="CHEBI:65315"/>
        <dbReference type="ChEBI" id="CHEBI:74447"/>
        <dbReference type="EC" id="2.1.1.74"/>
    </reaction>
</comment>
<comment type="catalytic activity">
    <reaction evidence="1">
        <text>uridine(54) in tRNA + (6R)-5,10-methylene-5,6,7,8-tetrahydrofolate + NADPH + H(+) = 5-methyluridine(54) in tRNA + (6S)-5,6,7,8-tetrahydrofolate + NADP(+)</text>
        <dbReference type="Rhea" id="RHEA:62372"/>
        <dbReference type="Rhea" id="RHEA-COMP:10167"/>
        <dbReference type="Rhea" id="RHEA-COMP:10193"/>
        <dbReference type="ChEBI" id="CHEBI:15378"/>
        <dbReference type="ChEBI" id="CHEBI:15636"/>
        <dbReference type="ChEBI" id="CHEBI:57453"/>
        <dbReference type="ChEBI" id="CHEBI:57783"/>
        <dbReference type="ChEBI" id="CHEBI:58349"/>
        <dbReference type="ChEBI" id="CHEBI:65315"/>
        <dbReference type="ChEBI" id="CHEBI:74447"/>
        <dbReference type="EC" id="2.1.1.74"/>
    </reaction>
</comment>
<comment type="cofactor">
    <cofactor evidence="1">
        <name>FAD</name>
        <dbReference type="ChEBI" id="CHEBI:57692"/>
    </cofactor>
</comment>
<comment type="subcellular location">
    <subcellularLocation>
        <location evidence="1">Cytoplasm</location>
    </subcellularLocation>
</comment>
<comment type="similarity">
    <text evidence="1">Belongs to the MnmG family. TrmFO subfamily.</text>
</comment>
<proteinExistence type="inferred from homology"/>
<accession>Q92C76</accession>
<evidence type="ECO:0000255" key="1">
    <source>
        <dbReference type="HAMAP-Rule" id="MF_01037"/>
    </source>
</evidence>
<feature type="chain" id="PRO_0000117250" description="Methylenetetrahydrofolate--tRNA-(uracil-5-)-methyltransferase TrmFO">
    <location>
        <begin position="1"/>
        <end position="434"/>
    </location>
</feature>
<feature type="binding site" evidence="1">
    <location>
        <begin position="9"/>
        <end position="14"/>
    </location>
    <ligand>
        <name>FAD</name>
        <dbReference type="ChEBI" id="CHEBI:57692"/>
    </ligand>
</feature>
<organism>
    <name type="scientific">Listeria innocua serovar 6a (strain ATCC BAA-680 / CLIP 11262)</name>
    <dbReference type="NCBI Taxonomy" id="272626"/>
    <lineage>
        <taxon>Bacteria</taxon>
        <taxon>Bacillati</taxon>
        <taxon>Bacillota</taxon>
        <taxon>Bacilli</taxon>
        <taxon>Bacillales</taxon>
        <taxon>Listeriaceae</taxon>
        <taxon>Listeria</taxon>
    </lineage>
</organism>